<accession>Q87XG2</accession>
<name>ERA_PSESM</name>
<keyword id="KW-0997">Cell inner membrane</keyword>
<keyword id="KW-1003">Cell membrane</keyword>
<keyword id="KW-0963">Cytoplasm</keyword>
<keyword id="KW-0342">GTP-binding</keyword>
<keyword id="KW-0472">Membrane</keyword>
<keyword id="KW-0547">Nucleotide-binding</keyword>
<keyword id="KW-1185">Reference proteome</keyword>
<keyword id="KW-0690">Ribosome biogenesis</keyword>
<keyword id="KW-0694">RNA-binding</keyword>
<keyword id="KW-0699">rRNA-binding</keyword>
<proteinExistence type="inferred from homology"/>
<feature type="chain" id="PRO_0000180038" description="GTPase Era">
    <location>
        <begin position="1"/>
        <end position="300"/>
    </location>
</feature>
<feature type="domain" description="Era-type G" evidence="2">
    <location>
        <begin position="8"/>
        <end position="176"/>
    </location>
</feature>
<feature type="domain" description="KH type-2" evidence="1">
    <location>
        <begin position="199"/>
        <end position="283"/>
    </location>
</feature>
<feature type="region of interest" description="G1" evidence="2">
    <location>
        <begin position="16"/>
        <end position="23"/>
    </location>
</feature>
<feature type="region of interest" description="G2" evidence="2">
    <location>
        <begin position="42"/>
        <end position="46"/>
    </location>
</feature>
<feature type="region of interest" description="G3" evidence="2">
    <location>
        <begin position="63"/>
        <end position="66"/>
    </location>
</feature>
<feature type="region of interest" description="G4" evidence="2">
    <location>
        <begin position="125"/>
        <end position="128"/>
    </location>
</feature>
<feature type="region of interest" description="G5" evidence="2">
    <location>
        <begin position="155"/>
        <end position="157"/>
    </location>
</feature>
<feature type="binding site" evidence="1">
    <location>
        <begin position="16"/>
        <end position="23"/>
    </location>
    <ligand>
        <name>GTP</name>
        <dbReference type="ChEBI" id="CHEBI:37565"/>
    </ligand>
</feature>
<feature type="binding site" evidence="1">
    <location>
        <begin position="63"/>
        <end position="67"/>
    </location>
    <ligand>
        <name>GTP</name>
        <dbReference type="ChEBI" id="CHEBI:37565"/>
    </ligand>
</feature>
<feature type="binding site" evidence="1">
    <location>
        <begin position="125"/>
        <end position="128"/>
    </location>
    <ligand>
        <name>GTP</name>
        <dbReference type="ChEBI" id="CHEBI:37565"/>
    </ligand>
</feature>
<organism>
    <name type="scientific">Pseudomonas syringae pv. tomato (strain ATCC BAA-871 / DC3000)</name>
    <dbReference type="NCBI Taxonomy" id="223283"/>
    <lineage>
        <taxon>Bacteria</taxon>
        <taxon>Pseudomonadati</taxon>
        <taxon>Pseudomonadota</taxon>
        <taxon>Gammaproteobacteria</taxon>
        <taxon>Pseudomonadales</taxon>
        <taxon>Pseudomonadaceae</taxon>
        <taxon>Pseudomonas</taxon>
    </lineage>
</organism>
<comment type="function">
    <text evidence="1">An essential GTPase that binds both GDP and GTP, with rapid nucleotide exchange. Plays a role in 16S rRNA processing and 30S ribosomal subunit biogenesis and possibly also in cell cycle regulation and energy metabolism.</text>
</comment>
<comment type="subunit">
    <text evidence="1">Monomer.</text>
</comment>
<comment type="subcellular location">
    <subcellularLocation>
        <location>Cytoplasm</location>
    </subcellularLocation>
    <subcellularLocation>
        <location evidence="1">Cell inner membrane</location>
        <topology evidence="1">Peripheral membrane protein</topology>
    </subcellularLocation>
</comment>
<comment type="similarity">
    <text evidence="1 2">Belongs to the TRAFAC class TrmE-Era-EngA-EngB-Septin-like GTPase superfamily. Era GTPase family.</text>
</comment>
<gene>
    <name evidence="1" type="primary">era</name>
    <name type="ordered locus">PSPTO_4216</name>
</gene>
<reference key="1">
    <citation type="journal article" date="2003" name="Proc. Natl. Acad. Sci. U.S.A.">
        <title>The complete genome sequence of the Arabidopsis and tomato pathogen Pseudomonas syringae pv. tomato DC3000.</title>
        <authorList>
            <person name="Buell C.R."/>
            <person name="Joardar V."/>
            <person name="Lindeberg M."/>
            <person name="Selengut J."/>
            <person name="Paulsen I.T."/>
            <person name="Gwinn M.L."/>
            <person name="Dodson R.J."/>
            <person name="DeBoy R.T."/>
            <person name="Durkin A.S."/>
            <person name="Kolonay J.F."/>
            <person name="Madupu R."/>
            <person name="Daugherty S.C."/>
            <person name="Brinkac L.M."/>
            <person name="Beanan M.J."/>
            <person name="Haft D.H."/>
            <person name="Nelson W.C."/>
            <person name="Davidsen T.M."/>
            <person name="Zafar N."/>
            <person name="Zhou L."/>
            <person name="Liu J."/>
            <person name="Yuan Q."/>
            <person name="Khouri H.M."/>
            <person name="Fedorova N.B."/>
            <person name="Tran B."/>
            <person name="Russell D."/>
            <person name="Berry K.J."/>
            <person name="Utterback T.R."/>
            <person name="Van Aken S.E."/>
            <person name="Feldblyum T.V."/>
            <person name="D'Ascenzo M."/>
            <person name="Deng W.-L."/>
            <person name="Ramos A.R."/>
            <person name="Alfano J.R."/>
            <person name="Cartinhour S."/>
            <person name="Chatterjee A.K."/>
            <person name="Delaney T.P."/>
            <person name="Lazarowitz S.G."/>
            <person name="Martin G.B."/>
            <person name="Schneider D.J."/>
            <person name="Tang X."/>
            <person name="Bender C.L."/>
            <person name="White O."/>
            <person name="Fraser C.M."/>
            <person name="Collmer A."/>
        </authorList>
    </citation>
    <scope>NUCLEOTIDE SEQUENCE [LARGE SCALE GENOMIC DNA]</scope>
    <source>
        <strain>ATCC BAA-871 / DC3000</strain>
    </source>
</reference>
<dbReference type="EMBL" id="AE016853">
    <property type="protein sequence ID" value="AAO57672.1"/>
    <property type="molecule type" value="Genomic_DNA"/>
</dbReference>
<dbReference type="RefSeq" id="NP_793977.1">
    <property type="nucleotide sequence ID" value="NC_004578.1"/>
</dbReference>
<dbReference type="RefSeq" id="WP_011104911.1">
    <property type="nucleotide sequence ID" value="NC_004578.1"/>
</dbReference>
<dbReference type="SMR" id="Q87XG2"/>
<dbReference type="STRING" id="223283.PSPTO_4216"/>
<dbReference type="GeneID" id="1185896"/>
<dbReference type="KEGG" id="pst:PSPTO_4216"/>
<dbReference type="PATRIC" id="fig|223283.9.peg.4323"/>
<dbReference type="eggNOG" id="COG1159">
    <property type="taxonomic scope" value="Bacteria"/>
</dbReference>
<dbReference type="HOGENOM" id="CLU_038009_1_2_6"/>
<dbReference type="OrthoDB" id="9805918at2"/>
<dbReference type="PhylomeDB" id="Q87XG2"/>
<dbReference type="Proteomes" id="UP000002515">
    <property type="component" value="Chromosome"/>
</dbReference>
<dbReference type="GO" id="GO:0005829">
    <property type="term" value="C:cytosol"/>
    <property type="evidence" value="ECO:0007669"/>
    <property type="project" value="TreeGrafter"/>
</dbReference>
<dbReference type="GO" id="GO:0005886">
    <property type="term" value="C:plasma membrane"/>
    <property type="evidence" value="ECO:0007669"/>
    <property type="project" value="UniProtKB-SubCell"/>
</dbReference>
<dbReference type="GO" id="GO:0005525">
    <property type="term" value="F:GTP binding"/>
    <property type="evidence" value="ECO:0007669"/>
    <property type="project" value="UniProtKB-UniRule"/>
</dbReference>
<dbReference type="GO" id="GO:0003924">
    <property type="term" value="F:GTPase activity"/>
    <property type="evidence" value="ECO:0007669"/>
    <property type="project" value="UniProtKB-UniRule"/>
</dbReference>
<dbReference type="GO" id="GO:0043024">
    <property type="term" value="F:ribosomal small subunit binding"/>
    <property type="evidence" value="ECO:0007669"/>
    <property type="project" value="TreeGrafter"/>
</dbReference>
<dbReference type="GO" id="GO:0070181">
    <property type="term" value="F:small ribosomal subunit rRNA binding"/>
    <property type="evidence" value="ECO:0007669"/>
    <property type="project" value="UniProtKB-UniRule"/>
</dbReference>
<dbReference type="GO" id="GO:0000028">
    <property type="term" value="P:ribosomal small subunit assembly"/>
    <property type="evidence" value="ECO:0007669"/>
    <property type="project" value="TreeGrafter"/>
</dbReference>
<dbReference type="CDD" id="cd04163">
    <property type="entry name" value="Era"/>
    <property type="match status" value="1"/>
</dbReference>
<dbReference type="CDD" id="cd22534">
    <property type="entry name" value="KH-II_Era"/>
    <property type="match status" value="1"/>
</dbReference>
<dbReference type="FunFam" id="3.30.300.20:FF:000003">
    <property type="entry name" value="GTPase Era"/>
    <property type="match status" value="1"/>
</dbReference>
<dbReference type="FunFam" id="3.40.50.300:FF:000094">
    <property type="entry name" value="GTPase Era"/>
    <property type="match status" value="1"/>
</dbReference>
<dbReference type="Gene3D" id="3.30.300.20">
    <property type="match status" value="1"/>
</dbReference>
<dbReference type="Gene3D" id="3.40.50.300">
    <property type="entry name" value="P-loop containing nucleotide triphosphate hydrolases"/>
    <property type="match status" value="1"/>
</dbReference>
<dbReference type="HAMAP" id="MF_00367">
    <property type="entry name" value="GTPase_Era"/>
    <property type="match status" value="1"/>
</dbReference>
<dbReference type="InterPro" id="IPR030388">
    <property type="entry name" value="G_ERA_dom"/>
</dbReference>
<dbReference type="InterPro" id="IPR006073">
    <property type="entry name" value="GTP-bd"/>
</dbReference>
<dbReference type="InterPro" id="IPR005662">
    <property type="entry name" value="GTPase_Era-like"/>
</dbReference>
<dbReference type="InterPro" id="IPR015946">
    <property type="entry name" value="KH_dom-like_a/b"/>
</dbReference>
<dbReference type="InterPro" id="IPR004044">
    <property type="entry name" value="KH_dom_type_2"/>
</dbReference>
<dbReference type="InterPro" id="IPR009019">
    <property type="entry name" value="KH_sf_prok-type"/>
</dbReference>
<dbReference type="InterPro" id="IPR027417">
    <property type="entry name" value="P-loop_NTPase"/>
</dbReference>
<dbReference type="InterPro" id="IPR005225">
    <property type="entry name" value="Small_GTP-bd"/>
</dbReference>
<dbReference type="NCBIfam" id="TIGR00436">
    <property type="entry name" value="era"/>
    <property type="match status" value="1"/>
</dbReference>
<dbReference type="NCBIfam" id="NF000908">
    <property type="entry name" value="PRK00089.1"/>
    <property type="match status" value="1"/>
</dbReference>
<dbReference type="NCBIfam" id="TIGR00231">
    <property type="entry name" value="small_GTP"/>
    <property type="match status" value="1"/>
</dbReference>
<dbReference type="PANTHER" id="PTHR42698">
    <property type="entry name" value="GTPASE ERA"/>
    <property type="match status" value="1"/>
</dbReference>
<dbReference type="PANTHER" id="PTHR42698:SF1">
    <property type="entry name" value="GTPASE ERA, MITOCHONDRIAL"/>
    <property type="match status" value="1"/>
</dbReference>
<dbReference type="Pfam" id="PF07650">
    <property type="entry name" value="KH_2"/>
    <property type="match status" value="1"/>
</dbReference>
<dbReference type="Pfam" id="PF01926">
    <property type="entry name" value="MMR_HSR1"/>
    <property type="match status" value="1"/>
</dbReference>
<dbReference type="PRINTS" id="PR00326">
    <property type="entry name" value="GTP1OBG"/>
</dbReference>
<dbReference type="SUPFAM" id="SSF52540">
    <property type="entry name" value="P-loop containing nucleoside triphosphate hydrolases"/>
    <property type="match status" value="1"/>
</dbReference>
<dbReference type="SUPFAM" id="SSF54814">
    <property type="entry name" value="Prokaryotic type KH domain (KH-domain type II)"/>
    <property type="match status" value="1"/>
</dbReference>
<dbReference type="PROSITE" id="PS51713">
    <property type="entry name" value="G_ERA"/>
    <property type="match status" value="1"/>
</dbReference>
<dbReference type="PROSITE" id="PS50823">
    <property type="entry name" value="KH_TYPE_2"/>
    <property type="match status" value="1"/>
</dbReference>
<evidence type="ECO:0000255" key="1">
    <source>
        <dbReference type="HAMAP-Rule" id="MF_00367"/>
    </source>
</evidence>
<evidence type="ECO:0000255" key="2">
    <source>
        <dbReference type="PROSITE-ProRule" id="PRU01050"/>
    </source>
</evidence>
<protein>
    <recommendedName>
        <fullName evidence="1">GTPase Era</fullName>
    </recommendedName>
</protein>
<sequence>MNDTTATRCGYVAIVGRPNVGKSTLLNHILGQKLAITSRKPQTTRHNMLGIKTEGTVQAIYVDTPGMHKNGEKALNRYMNKTASAALKDVDVVIFVVDRTRWTDEDQMVLERVQYVQGPVILAINKTDRIEDKSDLMPHLEWLQGQLPNASIVPISAQHGHNLEALESLIASHLPENDHFFPEDQITDRSSRFLAAELVREKIMRQLGAELPYQITVEIEEFKQQGRTLHIHALILVERDGQKKIIIGDKGDRIKRIGSDARRDMEVLFDSKVMLNLWVKVKGGWSDDERALRSLGYGDL</sequence>